<comment type="function">
    <text evidence="1">Divisome component that associates with the complex late in its assembly, after the Z-ring is formed, and is dependent on DivIC and PBP2B for its recruitment to the divisome. Together with EzrA, is a key component of the system that regulates PBP1 localization during cell cycle progression. Its main role could be the removal of PBP1 from the cell pole after pole maturation is completed. Also contributes to the recruitment of PBP1 to the division complex. Not essential for septum formation.</text>
</comment>
<comment type="subunit">
    <text evidence="1">Forms polymers through the coiled coil domains. Interacts with PBP1, MreC and EzrA.</text>
</comment>
<comment type="subcellular location">
    <subcellularLocation>
        <location evidence="1">Cytoplasm</location>
    </subcellularLocation>
    <text evidence="1">Shuttles between the lateral wall and the division site in a cell cycle-dependent manner.</text>
</comment>
<comment type="similarity">
    <text evidence="1">Belongs to the GpsB family.</text>
</comment>
<keyword id="KW-0131">Cell cycle</keyword>
<keyword id="KW-0132">Cell division</keyword>
<keyword id="KW-0133">Cell shape</keyword>
<keyword id="KW-0175">Coiled coil</keyword>
<keyword id="KW-0963">Cytoplasm</keyword>
<feature type="chain" id="PRO_0000337936" description="Cell cycle protein GpsB">
    <location>
        <begin position="1"/>
        <end position="114"/>
    </location>
</feature>
<feature type="region of interest" description="Disordered" evidence="2">
    <location>
        <begin position="74"/>
        <end position="99"/>
    </location>
</feature>
<feature type="coiled-coil region" evidence="1">
    <location>
        <begin position="42"/>
        <end position="77"/>
    </location>
</feature>
<feature type="compositionally biased region" description="Low complexity" evidence="2">
    <location>
        <begin position="85"/>
        <end position="97"/>
    </location>
</feature>
<reference key="1">
    <citation type="journal article" date="2004" name="Proc. Natl. Acad. Sci. U.S.A.">
        <title>Complete genomes of two clinical Staphylococcus aureus strains: evidence for the rapid evolution of virulence and drug resistance.</title>
        <authorList>
            <person name="Holden M.T.G."/>
            <person name="Feil E.J."/>
            <person name="Lindsay J.A."/>
            <person name="Peacock S.J."/>
            <person name="Day N.P.J."/>
            <person name="Enright M.C."/>
            <person name="Foster T.J."/>
            <person name="Moore C.E."/>
            <person name="Hurst L."/>
            <person name="Atkin R."/>
            <person name="Barron A."/>
            <person name="Bason N."/>
            <person name="Bentley S.D."/>
            <person name="Chillingworth C."/>
            <person name="Chillingworth T."/>
            <person name="Churcher C."/>
            <person name="Clark L."/>
            <person name="Corton C."/>
            <person name="Cronin A."/>
            <person name="Doggett J."/>
            <person name="Dowd L."/>
            <person name="Feltwell T."/>
            <person name="Hance Z."/>
            <person name="Harris B."/>
            <person name="Hauser H."/>
            <person name="Holroyd S."/>
            <person name="Jagels K."/>
            <person name="James K.D."/>
            <person name="Lennard N."/>
            <person name="Line A."/>
            <person name="Mayes R."/>
            <person name="Moule S."/>
            <person name="Mungall K."/>
            <person name="Ormond D."/>
            <person name="Quail M.A."/>
            <person name="Rabbinowitsch E."/>
            <person name="Rutherford K.M."/>
            <person name="Sanders M."/>
            <person name="Sharp S."/>
            <person name="Simmonds M."/>
            <person name="Stevens K."/>
            <person name="Whitehead S."/>
            <person name="Barrell B.G."/>
            <person name="Spratt B.G."/>
            <person name="Parkhill J."/>
        </authorList>
    </citation>
    <scope>NUCLEOTIDE SEQUENCE [LARGE SCALE GENOMIC DNA]</scope>
    <source>
        <strain>MSSA476</strain>
    </source>
</reference>
<accession>Q6G9B7</accession>
<protein>
    <recommendedName>
        <fullName evidence="1">Cell cycle protein GpsB</fullName>
    </recommendedName>
    <alternativeName>
        <fullName evidence="1">Guiding PBP1-shuttling protein</fullName>
    </alternativeName>
</protein>
<dbReference type="EMBL" id="BX571857">
    <property type="protein sequence ID" value="CAG43164.1"/>
    <property type="molecule type" value="Genomic_DNA"/>
</dbReference>
<dbReference type="RefSeq" id="WP_001286320.1">
    <property type="nucleotide sequence ID" value="NC_002953.3"/>
</dbReference>
<dbReference type="SMR" id="Q6G9B7"/>
<dbReference type="GeneID" id="98345812"/>
<dbReference type="KEGG" id="sas:SAS1388"/>
<dbReference type="HOGENOM" id="CLU_140309_1_0_9"/>
<dbReference type="GO" id="GO:0005737">
    <property type="term" value="C:cytoplasm"/>
    <property type="evidence" value="ECO:0007669"/>
    <property type="project" value="UniProtKB-SubCell"/>
</dbReference>
<dbReference type="GO" id="GO:0051301">
    <property type="term" value="P:cell division"/>
    <property type="evidence" value="ECO:0007669"/>
    <property type="project" value="UniProtKB-UniRule"/>
</dbReference>
<dbReference type="GO" id="GO:0008360">
    <property type="term" value="P:regulation of cell shape"/>
    <property type="evidence" value="ECO:0007669"/>
    <property type="project" value="UniProtKB-UniRule"/>
</dbReference>
<dbReference type="Gene3D" id="6.10.250.660">
    <property type="match status" value="1"/>
</dbReference>
<dbReference type="HAMAP" id="MF_02011">
    <property type="entry name" value="GpsB"/>
    <property type="match status" value="1"/>
</dbReference>
<dbReference type="InterPro" id="IPR011229">
    <property type="entry name" value="Cell_cycle_GpsB"/>
</dbReference>
<dbReference type="InterPro" id="IPR019933">
    <property type="entry name" value="DivIVA_domain"/>
</dbReference>
<dbReference type="InterPro" id="IPR007793">
    <property type="entry name" value="DivIVA_fam"/>
</dbReference>
<dbReference type="NCBIfam" id="TIGR03544">
    <property type="entry name" value="DivI1A_domain"/>
    <property type="match status" value="1"/>
</dbReference>
<dbReference type="NCBIfam" id="NF010725">
    <property type="entry name" value="PRK14127.1"/>
    <property type="match status" value="1"/>
</dbReference>
<dbReference type="PANTHER" id="PTHR35794:SF1">
    <property type="entry name" value="CELL CYCLE PROTEIN GPSB"/>
    <property type="match status" value="1"/>
</dbReference>
<dbReference type="PANTHER" id="PTHR35794">
    <property type="entry name" value="CELL DIVISION PROTEIN DIVIVA"/>
    <property type="match status" value="1"/>
</dbReference>
<dbReference type="Pfam" id="PF05103">
    <property type="entry name" value="DivIVA"/>
    <property type="match status" value="1"/>
</dbReference>
<dbReference type="PIRSF" id="PIRSF029938">
    <property type="entry name" value="UCP029938"/>
    <property type="match status" value="1"/>
</dbReference>
<gene>
    <name evidence="1" type="primary">gpsB</name>
    <name type="ordered locus">SAS1388</name>
</gene>
<sequence>MSDVSLKLSAKDIYEKDFEKTMARGYRREEVDAFLDDIIADYQKMADMNNEVVKLSEENHKLKKELEELRLRVATSRPQDNKSFSSNNTTTNTSSNNVDILKRISNLEKAVFGK</sequence>
<evidence type="ECO:0000255" key="1">
    <source>
        <dbReference type="HAMAP-Rule" id="MF_02011"/>
    </source>
</evidence>
<evidence type="ECO:0000256" key="2">
    <source>
        <dbReference type="SAM" id="MobiDB-lite"/>
    </source>
</evidence>
<organism>
    <name type="scientific">Staphylococcus aureus (strain MSSA476)</name>
    <dbReference type="NCBI Taxonomy" id="282459"/>
    <lineage>
        <taxon>Bacteria</taxon>
        <taxon>Bacillati</taxon>
        <taxon>Bacillota</taxon>
        <taxon>Bacilli</taxon>
        <taxon>Bacillales</taxon>
        <taxon>Staphylococcaceae</taxon>
        <taxon>Staphylococcus</taxon>
    </lineage>
</organism>
<name>GPSB_STAAS</name>
<proteinExistence type="inferred from homology"/>